<organism>
    <name type="scientific">Arabidopsis thaliana</name>
    <name type="common">Mouse-ear cress</name>
    <dbReference type="NCBI Taxonomy" id="3702"/>
    <lineage>
        <taxon>Eukaryota</taxon>
        <taxon>Viridiplantae</taxon>
        <taxon>Streptophyta</taxon>
        <taxon>Embryophyta</taxon>
        <taxon>Tracheophyta</taxon>
        <taxon>Spermatophyta</taxon>
        <taxon>Magnoliopsida</taxon>
        <taxon>eudicotyledons</taxon>
        <taxon>Gunneridae</taxon>
        <taxon>Pentapetalae</taxon>
        <taxon>rosids</taxon>
        <taxon>malvids</taxon>
        <taxon>Brassicales</taxon>
        <taxon>Brassicaceae</taxon>
        <taxon>Camelineae</taxon>
        <taxon>Arabidopsis</taxon>
    </lineage>
</organism>
<keyword id="KW-0050">Antiport</keyword>
<keyword id="KW-0406">Ion transport</keyword>
<keyword id="KW-0472">Membrane</keyword>
<keyword id="KW-0630">Potassium</keyword>
<keyword id="KW-0633">Potassium transport</keyword>
<keyword id="KW-1185">Reference proteome</keyword>
<keyword id="KW-0812">Transmembrane</keyword>
<keyword id="KW-1133">Transmembrane helix</keyword>
<keyword id="KW-0813">Transport</keyword>
<comment type="function">
    <text evidence="1">May operate as a cation/H(+) antiporter.</text>
</comment>
<comment type="subcellular location">
    <subcellularLocation>
        <location evidence="1">Membrane</location>
        <topology evidence="1">Multi-pass membrane protein</topology>
    </subcellularLocation>
</comment>
<comment type="tissue specificity">
    <text evidence="3">Specifically expressed in pollen.</text>
</comment>
<comment type="similarity">
    <text evidence="4">Belongs to the monovalent cation:proton antiporter 2 (CPA2) transporter (TC 2.A.37) family. CHX (TC 2.A.37.4) subfamily.</text>
</comment>
<comment type="sequence caution" evidence="4">
    <conflict type="erroneous initiation">
        <sequence resource="EMBL-CDS" id="CAC03543"/>
    </conflict>
    <text>Truncated N-terminus.</text>
</comment>
<accession>Q58P69</accession>
<accession>Q9FYB8</accession>
<gene>
    <name type="primary">CHX10</name>
    <name type="ordered locus">At3g44930</name>
    <name type="ORF">F28D10_120</name>
</gene>
<name>CHX10_ARATH</name>
<proteinExistence type="evidence at transcript level"/>
<feature type="chain" id="PRO_0000394981" description="Cation/H(+) antiporter 10">
    <location>
        <begin position="1"/>
        <end position="783"/>
    </location>
</feature>
<feature type="transmembrane region" description="Helical" evidence="2">
    <location>
        <begin position="31"/>
        <end position="51"/>
    </location>
</feature>
<feature type="transmembrane region" description="Helical" evidence="2">
    <location>
        <begin position="61"/>
        <end position="81"/>
    </location>
</feature>
<feature type="transmembrane region" description="Helical" evidence="2">
    <location>
        <begin position="100"/>
        <end position="120"/>
    </location>
</feature>
<feature type="transmembrane region" description="Helical" evidence="2">
    <location>
        <begin position="135"/>
        <end position="155"/>
    </location>
</feature>
<feature type="transmembrane region" description="Helical" evidence="2">
    <location>
        <begin position="175"/>
        <end position="195"/>
    </location>
</feature>
<feature type="transmembrane region" description="Helical" evidence="2">
    <location>
        <begin position="206"/>
        <end position="226"/>
    </location>
</feature>
<feature type="transmembrane region" description="Helical" evidence="2">
    <location>
        <begin position="244"/>
        <end position="264"/>
    </location>
</feature>
<feature type="transmembrane region" description="Helical" evidence="2">
    <location>
        <begin position="276"/>
        <end position="295"/>
    </location>
</feature>
<feature type="transmembrane region" description="Helical" evidence="2">
    <location>
        <begin position="300"/>
        <end position="322"/>
    </location>
</feature>
<feature type="transmembrane region" description="Helical" evidence="2">
    <location>
        <begin position="356"/>
        <end position="376"/>
    </location>
</feature>
<feature type="transmembrane region" description="Helical" evidence="2">
    <location>
        <begin position="389"/>
        <end position="409"/>
    </location>
</feature>
<feature type="transmembrane region" description="Helical" evidence="2">
    <location>
        <begin position="418"/>
        <end position="438"/>
    </location>
</feature>
<dbReference type="EMBL" id="AL391254">
    <property type="protein sequence ID" value="CAC03543.1"/>
    <property type="status" value="ALT_INIT"/>
    <property type="molecule type" value="Genomic_DNA"/>
</dbReference>
<dbReference type="EMBL" id="CP002686">
    <property type="protein sequence ID" value="AEE77969.1"/>
    <property type="molecule type" value="Genomic_DNA"/>
</dbReference>
<dbReference type="EMBL" id="AY926470">
    <property type="protein sequence ID" value="AAX49542.1"/>
    <property type="molecule type" value="mRNA"/>
</dbReference>
<dbReference type="PIR" id="T51790">
    <property type="entry name" value="T51790"/>
</dbReference>
<dbReference type="RefSeq" id="NP_190079.2">
    <property type="nucleotide sequence ID" value="NM_114362.3"/>
</dbReference>
<dbReference type="SMR" id="Q58P69"/>
<dbReference type="BioGRID" id="8947">
    <property type="interactions" value="7"/>
</dbReference>
<dbReference type="IntAct" id="Q58P69">
    <property type="interactions" value="6"/>
</dbReference>
<dbReference type="STRING" id="3702.Q58P69"/>
<dbReference type="PaxDb" id="3702-AT3G44930.1"/>
<dbReference type="ProteomicsDB" id="246836"/>
<dbReference type="EnsemblPlants" id="AT3G44930.1">
    <property type="protein sequence ID" value="AT3G44930.1"/>
    <property type="gene ID" value="AT3G44930"/>
</dbReference>
<dbReference type="GeneID" id="823627"/>
<dbReference type="Gramene" id="AT3G44930.1">
    <property type="protein sequence ID" value="AT3G44930.1"/>
    <property type="gene ID" value="AT3G44930"/>
</dbReference>
<dbReference type="KEGG" id="ath:AT3G44930"/>
<dbReference type="Araport" id="AT3G44930"/>
<dbReference type="TAIR" id="AT3G44930">
    <property type="gene designation" value="CHX10"/>
</dbReference>
<dbReference type="eggNOG" id="KOG1650">
    <property type="taxonomic scope" value="Eukaryota"/>
</dbReference>
<dbReference type="HOGENOM" id="CLU_005126_6_1_1"/>
<dbReference type="InParanoid" id="Q58P69"/>
<dbReference type="OMA" id="SIHATYK"/>
<dbReference type="PhylomeDB" id="Q58P69"/>
<dbReference type="PRO" id="PR:Q58P69"/>
<dbReference type="Proteomes" id="UP000006548">
    <property type="component" value="Chromosome 3"/>
</dbReference>
<dbReference type="ExpressionAtlas" id="Q58P69">
    <property type="expression patterns" value="baseline"/>
</dbReference>
<dbReference type="GO" id="GO:0016020">
    <property type="term" value="C:membrane"/>
    <property type="evidence" value="ECO:0007669"/>
    <property type="project" value="UniProtKB-SubCell"/>
</dbReference>
<dbReference type="GO" id="GO:0015297">
    <property type="term" value="F:antiporter activity"/>
    <property type="evidence" value="ECO:0007669"/>
    <property type="project" value="UniProtKB-KW"/>
</dbReference>
<dbReference type="GO" id="GO:0006813">
    <property type="term" value="P:potassium ion transport"/>
    <property type="evidence" value="ECO:0007669"/>
    <property type="project" value="UniProtKB-KW"/>
</dbReference>
<dbReference type="GO" id="GO:1902600">
    <property type="term" value="P:proton transmembrane transport"/>
    <property type="evidence" value="ECO:0007669"/>
    <property type="project" value="InterPro"/>
</dbReference>
<dbReference type="Gene3D" id="1.20.1530.20">
    <property type="match status" value="1"/>
</dbReference>
<dbReference type="InterPro" id="IPR006153">
    <property type="entry name" value="Cation/H_exchanger_TM"/>
</dbReference>
<dbReference type="InterPro" id="IPR050794">
    <property type="entry name" value="CPA2_transporter"/>
</dbReference>
<dbReference type="InterPro" id="IPR038770">
    <property type="entry name" value="Na+/solute_symporter_sf"/>
</dbReference>
<dbReference type="PANTHER" id="PTHR32468">
    <property type="entry name" value="CATION/H + ANTIPORTER"/>
    <property type="match status" value="1"/>
</dbReference>
<dbReference type="PANTHER" id="PTHR32468:SF169">
    <property type="entry name" value="CATION_H(+) ANTIPORTER 10-RELATED"/>
    <property type="match status" value="1"/>
</dbReference>
<dbReference type="Pfam" id="PF23256">
    <property type="entry name" value="CHX17_2nd"/>
    <property type="match status" value="1"/>
</dbReference>
<dbReference type="Pfam" id="PF23259">
    <property type="entry name" value="CHX17_C"/>
    <property type="match status" value="1"/>
</dbReference>
<dbReference type="Pfam" id="PF00999">
    <property type="entry name" value="Na_H_Exchanger"/>
    <property type="match status" value="1"/>
</dbReference>
<evidence type="ECO:0000250" key="1"/>
<evidence type="ECO:0000255" key="2"/>
<evidence type="ECO:0000269" key="3">
    <source>
    </source>
</evidence>
<evidence type="ECO:0000305" key="4"/>
<reference key="1">
    <citation type="journal article" date="2000" name="Nature">
        <title>Sequence and analysis of chromosome 3 of the plant Arabidopsis thaliana.</title>
        <authorList>
            <person name="Salanoubat M."/>
            <person name="Lemcke K."/>
            <person name="Rieger M."/>
            <person name="Ansorge W."/>
            <person name="Unseld M."/>
            <person name="Fartmann B."/>
            <person name="Valle G."/>
            <person name="Bloecker H."/>
            <person name="Perez-Alonso M."/>
            <person name="Obermaier B."/>
            <person name="Delseny M."/>
            <person name="Boutry M."/>
            <person name="Grivell L.A."/>
            <person name="Mache R."/>
            <person name="Puigdomenech P."/>
            <person name="De Simone V."/>
            <person name="Choisne N."/>
            <person name="Artiguenave F."/>
            <person name="Robert C."/>
            <person name="Brottier P."/>
            <person name="Wincker P."/>
            <person name="Cattolico L."/>
            <person name="Weissenbach J."/>
            <person name="Saurin W."/>
            <person name="Quetier F."/>
            <person name="Schaefer M."/>
            <person name="Mueller-Auer S."/>
            <person name="Gabel C."/>
            <person name="Fuchs M."/>
            <person name="Benes V."/>
            <person name="Wurmbach E."/>
            <person name="Drzonek H."/>
            <person name="Erfle H."/>
            <person name="Jordan N."/>
            <person name="Bangert S."/>
            <person name="Wiedelmann R."/>
            <person name="Kranz H."/>
            <person name="Voss H."/>
            <person name="Holland R."/>
            <person name="Brandt P."/>
            <person name="Nyakatura G."/>
            <person name="Vezzi A."/>
            <person name="D'Angelo M."/>
            <person name="Pallavicini A."/>
            <person name="Toppo S."/>
            <person name="Simionati B."/>
            <person name="Conrad A."/>
            <person name="Hornischer K."/>
            <person name="Kauer G."/>
            <person name="Loehnert T.-H."/>
            <person name="Nordsiek G."/>
            <person name="Reichelt J."/>
            <person name="Scharfe M."/>
            <person name="Schoen O."/>
            <person name="Bargues M."/>
            <person name="Terol J."/>
            <person name="Climent J."/>
            <person name="Navarro P."/>
            <person name="Collado C."/>
            <person name="Perez-Perez A."/>
            <person name="Ottenwaelder B."/>
            <person name="Duchemin D."/>
            <person name="Cooke R."/>
            <person name="Laudie M."/>
            <person name="Berger-Llauro C."/>
            <person name="Purnelle B."/>
            <person name="Masuy D."/>
            <person name="de Haan M."/>
            <person name="Maarse A.C."/>
            <person name="Alcaraz J.-P."/>
            <person name="Cottet A."/>
            <person name="Casacuberta E."/>
            <person name="Monfort A."/>
            <person name="Argiriou A."/>
            <person name="Flores M."/>
            <person name="Liguori R."/>
            <person name="Vitale D."/>
            <person name="Mannhaupt G."/>
            <person name="Haase D."/>
            <person name="Schoof H."/>
            <person name="Rudd S."/>
            <person name="Zaccaria P."/>
            <person name="Mewes H.-W."/>
            <person name="Mayer K.F.X."/>
            <person name="Kaul S."/>
            <person name="Town C.D."/>
            <person name="Koo H.L."/>
            <person name="Tallon L.J."/>
            <person name="Jenkins J."/>
            <person name="Rooney T."/>
            <person name="Rizzo M."/>
            <person name="Walts A."/>
            <person name="Utterback T."/>
            <person name="Fujii C.Y."/>
            <person name="Shea T.P."/>
            <person name="Creasy T.H."/>
            <person name="Haas B."/>
            <person name="Maiti R."/>
            <person name="Wu D."/>
            <person name="Peterson J."/>
            <person name="Van Aken S."/>
            <person name="Pai G."/>
            <person name="Militscher J."/>
            <person name="Sellers P."/>
            <person name="Gill J.E."/>
            <person name="Feldblyum T.V."/>
            <person name="Preuss D."/>
            <person name="Lin X."/>
            <person name="Nierman W.C."/>
            <person name="Salzberg S.L."/>
            <person name="White O."/>
            <person name="Venter J.C."/>
            <person name="Fraser C.M."/>
            <person name="Kaneko T."/>
            <person name="Nakamura Y."/>
            <person name="Sato S."/>
            <person name="Kato T."/>
            <person name="Asamizu E."/>
            <person name="Sasamoto S."/>
            <person name="Kimura T."/>
            <person name="Idesawa K."/>
            <person name="Kawashima K."/>
            <person name="Kishida Y."/>
            <person name="Kiyokawa C."/>
            <person name="Kohara M."/>
            <person name="Matsumoto M."/>
            <person name="Matsuno A."/>
            <person name="Muraki A."/>
            <person name="Nakayama S."/>
            <person name="Nakazaki N."/>
            <person name="Shinpo S."/>
            <person name="Takeuchi C."/>
            <person name="Wada T."/>
            <person name="Watanabe A."/>
            <person name="Yamada M."/>
            <person name="Yasuda M."/>
            <person name="Tabata S."/>
        </authorList>
    </citation>
    <scope>NUCLEOTIDE SEQUENCE [LARGE SCALE GENOMIC DNA]</scope>
    <source>
        <strain>cv. Columbia</strain>
    </source>
</reference>
<reference key="2">
    <citation type="journal article" date="2017" name="Plant J.">
        <title>Araport11: a complete reannotation of the Arabidopsis thaliana reference genome.</title>
        <authorList>
            <person name="Cheng C.Y."/>
            <person name="Krishnakumar V."/>
            <person name="Chan A.P."/>
            <person name="Thibaud-Nissen F."/>
            <person name="Schobel S."/>
            <person name="Town C.D."/>
        </authorList>
    </citation>
    <scope>GENOME REANNOTATION</scope>
    <source>
        <strain>cv. Columbia</strain>
    </source>
</reference>
<reference key="3">
    <citation type="journal article" date="2004" name="Plant Physiol.">
        <title>Expression patterns of a novel AtCHX gene family highlight potential roles in osmotic adjustment and K+ homeostasis in pollen development.</title>
        <authorList>
            <person name="Sze H."/>
            <person name="Padmanaban S."/>
            <person name="Cellier F."/>
            <person name="Honys D."/>
            <person name="Cheng N.-H."/>
            <person name="Bock K.W."/>
            <person name="Conejero G."/>
            <person name="Li X."/>
            <person name="Twell D."/>
            <person name="Ward J.M."/>
            <person name="Hirschi K.D."/>
        </authorList>
    </citation>
    <scope>NUCLEOTIDE SEQUENCE [MRNA] OF 1-780</scope>
    <scope>TISSUE SPECIFICITY</scope>
    <scope>GENE FAMILY</scope>
    <scope>NOMENCLATURE</scope>
    <source>
        <tissue>Pollen</tissue>
    </source>
</reference>
<reference key="4">
    <citation type="journal article" date="2001" name="Plant Physiol.">
        <title>Phylogenetic relationships within cation transporter families of Arabidopsis.</title>
        <authorList>
            <person name="Maeser P."/>
            <person name="Thomine S."/>
            <person name="Schroeder J.I."/>
            <person name="Ward J.M."/>
            <person name="Hirschi K."/>
            <person name="Sze H."/>
            <person name="Talke I.N."/>
            <person name="Amtmann A."/>
            <person name="Maathuis F.J.M."/>
            <person name="Sanders D."/>
            <person name="Harper J.F."/>
            <person name="Tchieu J."/>
            <person name="Gribskov M."/>
            <person name="Persans M.W."/>
            <person name="Salt D.E."/>
            <person name="Kim S.A."/>
            <person name="Guerinot M.L."/>
        </authorList>
    </citation>
    <scope>GENE FAMILY</scope>
    <scope>NOMENCLATURE</scope>
</reference>
<protein>
    <recommendedName>
        <fullName>Cation/H(+) antiporter 10</fullName>
    </recommendedName>
    <alternativeName>
        <fullName>Protein CATION/H+ EXCHANGER 10</fullName>
        <shortName>AtCHX10</shortName>
    </alternativeName>
</protein>
<sequence length="783" mass="88143">MNTTTYIGDCRISFFNISSQGFWDNLKSPDVVFGYSLPLLEIQIILIFFCIVMSHMFLRCIGISQIASYMIAGIVLGPQLFDVLEKSSGKLSVDPALDGIAALRCISVFGTLMFTFLMTVRTSRRVAFHSGKLPVVIGIVSFFAPLFGLGFQNFFSDNIDPHYMPLTKALGERTAIVITQSSILLPSTTYILLELKIINSELGRLALSACVINDILGIFSMIVASIQATYIHVSHATAYRDTVAVIIFFLVVFLVFKPMVQWVIDRTPEDKPVEDMYIHAVIITALASAAYFVFFNMKYILGPLMIGIIIPEGPPLGSALEAKFERLTMNVFLPISITFSAMRCDGARILSQFNDIFFNIFLTFLILVIKLVACLAPCLYYKLPLSESLAVSFILSYKSFADFVLYEAVLDDTYISQATYSFLILYSLLNAGIVPTVLRRMYDPRRKYVNYQKRDILHLERNSDLRILTCLHKPENVSETIAFLQLLSSPNLDFPIAVTVLHLVKLVGQINPIIVSHDKKLKRLNKDSYIHTANLAFRQFVLESLESVTVTTFTAFSHENLMHEDICTLALDKTTSMIVVPSGRKWTVDGLFESDNTAIRHLNQSLLDRAPCSIGILVDRGQFSRKSIVTSKKRYIIDVGVLFIGGKDDREALSLVKRMKNNPRIRVTVIRLVFDHEIESDWDYILDNEGLKDLKSTEDNKDIDYIERIVTSSVEVVKAVQLLAEEYDLMVVGRDHDMTSQDLSGLMEWVELPELGVIGDLLAARDLSSKVSVLVVQQQQQRT</sequence>